<sequence length="108" mass="12655">MDKKDLFDAFDDFSQNLLVGLSEIETMKKQIQKLLEENTVLRIENGKLRERLSVIEAETETAVKNSKQGRELLEGIYNDGFHICNTFYGQRRENDEECAFCIELLYRD</sequence>
<gene>
    <name evidence="1" type="primary">yabA</name>
    <name type="ordered locus">SAG1573</name>
</gene>
<name>YABA_STRA5</name>
<accession>Q8DYB5</accession>
<organism>
    <name type="scientific">Streptococcus agalactiae serotype V (strain ATCC BAA-611 / 2603 V/R)</name>
    <dbReference type="NCBI Taxonomy" id="208435"/>
    <lineage>
        <taxon>Bacteria</taxon>
        <taxon>Bacillati</taxon>
        <taxon>Bacillota</taxon>
        <taxon>Bacilli</taxon>
        <taxon>Lactobacillales</taxon>
        <taxon>Streptococcaceae</taxon>
        <taxon>Streptococcus</taxon>
    </lineage>
</organism>
<evidence type="ECO:0000255" key="1">
    <source>
        <dbReference type="HAMAP-Rule" id="MF_01159"/>
    </source>
</evidence>
<reference key="1">
    <citation type="journal article" date="2002" name="Proc. Natl. Acad. Sci. U.S.A.">
        <title>Complete genome sequence and comparative genomic analysis of an emerging human pathogen, serotype V Streptococcus agalactiae.</title>
        <authorList>
            <person name="Tettelin H."/>
            <person name="Masignani V."/>
            <person name="Cieslewicz M.J."/>
            <person name="Eisen J.A."/>
            <person name="Peterson S.N."/>
            <person name="Wessels M.R."/>
            <person name="Paulsen I.T."/>
            <person name="Nelson K.E."/>
            <person name="Margarit I."/>
            <person name="Read T.D."/>
            <person name="Madoff L.C."/>
            <person name="Wolf A.M."/>
            <person name="Beanan M.J."/>
            <person name="Brinkac L.M."/>
            <person name="Daugherty S.C."/>
            <person name="DeBoy R.T."/>
            <person name="Durkin A.S."/>
            <person name="Kolonay J.F."/>
            <person name="Madupu R."/>
            <person name="Lewis M.R."/>
            <person name="Radune D."/>
            <person name="Fedorova N.B."/>
            <person name="Scanlan D."/>
            <person name="Khouri H.M."/>
            <person name="Mulligan S."/>
            <person name="Carty H.A."/>
            <person name="Cline R.T."/>
            <person name="Van Aken S.E."/>
            <person name="Gill J."/>
            <person name="Scarselli M."/>
            <person name="Mora M."/>
            <person name="Iacobini E.T."/>
            <person name="Brettoni C."/>
            <person name="Galli G."/>
            <person name="Mariani M."/>
            <person name="Vegni F."/>
            <person name="Maione D."/>
            <person name="Rinaudo D."/>
            <person name="Rappuoli R."/>
            <person name="Telford J.L."/>
            <person name="Kasper D.L."/>
            <person name="Grandi G."/>
            <person name="Fraser C.M."/>
        </authorList>
    </citation>
    <scope>NUCLEOTIDE SEQUENCE [LARGE SCALE GENOMIC DNA]</scope>
    <source>
        <strain>ATCC BAA-611 / 2603 V/R</strain>
    </source>
</reference>
<keyword id="KW-0963">Cytoplasm</keyword>
<keyword id="KW-0235">DNA replication</keyword>
<keyword id="KW-0236">DNA replication inhibitor</keyword>
<keyword id="KW-0479">Metal-binding</keyword>
<keyword id="KW-1185">Reference proteome</keyword>
<keyword id="KW-0862">Zinc</keyword>
<comment type="function">
    <text evidence="1">Involved in control of chromosome replication initiation. Inhibits the cooperative binding of DnaA to the oriC region, thus negatively regulating initiation of chromosome replication. Inhibits the ability of DnaA-ATP to form a helix on DNA; does not disassemble preformed DnaA-DNA helices. Decreases the residence time of DnaA on the chromosome at its binding sites (oriC, replication forks and promoter-binding sites). Tethers DnaA to the replication machinery via the DNA polymerase beta sliding clamp subunit (dnaN). Associates with oriC and other DnaA targets on the chromosome in a DnaA-dependent manner.</text>
</comment>
<comment type="cofactor">
    <cofactor evidence="1">
        <name>Zn(2+)</name>
        <dbReference type="ChEBI" id="CHEBI:29105"/>
    </cofactor>
    <text evidence="1">Binds 1 zinc ion per subunit.</text>
</comment>
<comment type="subunit">
    <text evidence="1">Homotetramer. Interacts with both DnaA and DnaN, acting as a bridge between these two proteins.</text>
</comment>
<comment type="subcellular location">
    <subcellularLocation>
        <location evidence="1">Cytoplasm</location>
        <location evidence="1">Nucleoid</location>
    </subcellularLocation>
    <text evidence="1">Localizes in tight foci, which correspond to the replisome at mid-cell throughout the cell cycle.</text>
</comment>
<comment type="similarity">
    <text evidence="1">Belongs to the YabA family.</text>
</comment>
<feature type="chain" id="PRO_0000211925" description="Replication initiation control protein YabA">
    <location>
        <begin position="1"/>
        <end position="108"/>
    </location>
</feature>
<feature type="binding site" evidence="1">
    <location>
        <position position="82"/>
    </location>
    <ligand>
        <name>Zn(2+)</name>
        <dbReference type="ChEBI" id="CHEBI:29105"/>
    </ligand>
</feature>
<feature type="binding site" evidence="1">
    <location>
        <position position="84"/>
    </location>
    <ligand>
        <name>Zn(2+)</name>
        <dbReference type="ChEBI" id="CHEBI:29105"/>
    </ligand>
</feature>
<feature type="binding site" evidence="1">
    <location>
        <position position="98"/>
    </location>
    <ligand>
        <name>Zn(2+)</name>
        <dbReference type="ChEBI" id="CHEBI:29105"/>
    </ligand>
</feature>
<feature type="binding site" evidence="1">
    <location>
        <position position="101"/>
    </location>
    <ligand>
        <name>Zn(2+)</name>
        <dbReference type="ChEBI" id="CHEBI:29105"/>
    </ligand>
</feature>
<proteinExistence type="inferred from homology"/>
<protein>
    <recommendedName>
        <fullName evidence="1">Replication initiation control protein YabA</fullName>
    </recommendedName>
</protein>
<dbReference type="EMBL" id="AE009948">
    <property type="protein sequence ID" value="AAN00438.1"/>
    <property type="molecule type" value="Genomic_DNA"/>
</dbReference>
<dbReference type="RefSeq" id="NP_688565.1">
    <property type="nucleotide sequence ID" value="NC_004116.1"/>
</dbReference>
<dbReference type="RefSeq" id="WP_000358198.1">
    <property type="nucleotide sequence ID" value="NC_004116.1"/>
</dbReference>
<dbReference type="SMR" id="Q8DYB5"/>
<dbReference type="STRING" id="208435.SAG1573"/>
<dbReference type="DNASU" id="1014382"/>
<dbReference type="GeneID" id="66886420"/>
<dbReference type="KEGG" id="sag:SAG1573"/>
<dbReference type="PATRIC" id="fig|208435.3.peg.1581"/>
<dbReference type="HOGENOM" id="CLU_157169_0_0_9"/>
<dbReference type="OrthoDB" id="2112130at2"/>
<dbReference type="Proteomes" id="UP000000821">
    <property type="component" value="Chromosome"/>
</dbReference>
<dbReference type="GO" id="GO:0009295">
    <property type="term" value="C:nucleoid"/>
    <property type="evidence" value="ECO:0007669"/>
    <property type="project" value="UniProtKB-SubCell"/>
</dbReference>
<dbReference type="GO" id="GO:0006260">
    <property type="term" value="P:DNA replication"/>
    <property type="evidence" value="ECO:0007669"/>
    <property type="project" value="UniProtKB-UniRule"/>
</dbReference>
<dbReference type="HAMAP" id="MF_01159">
    <property type="entry name" value="YabA"/>
    <property type="match status" value="1"/>
</dbReference>
<dbReference type="InterPro" id="IPR010377">
    <property type="entry name" value="YabA"/>
</dbReference>
<dbReference type="NCBIfam" id="NF009640">
    <property type="entry name" value="PRK13169.1-1"/>
    <property type="match status" value="1"/>
</dbReference>
<dbReference type="Pfam" id="PF06156">
    <property type="entry name" value="YabA"/>
    <property type="match status" value="1"/>
</dbReference>
<dbReference type="PIRSF" id="PIRSF021439">
    <property type="entry name" value="DUF972"/>
    <property type="match status" value="1"/>
</dbReference>